<keyword id="KW-0119">Carbohydrate metabolism</keyword>
<keyword id="KW-1015">Disulfide bond</keyword>
<keyword id="KW-0325">Glycoprotein</keyword>
<keyword id="KW-0326">Glycosidase</keyword>
<keyword id="KW-0378">Hydrolase</keyword>
<keyword id="KW-0624">Polysaccharide degradation</keyword>
<keyword id="KW-1185">Reference proteome</keyword>
<keyword id="KW-0964">Secreted</keyword>
<keyword id="KW-0732">Signal</keyword>
<feature type="signal peptide" evidence="2">
    <location>
        <begin position="1"/>
        <end position="27"/>
    </location>
</feature>
<feature type="chain" id="PRO_0000395232" description="Probable beta-galactosidase B">
    <location>
        <begin position="28"/>
        <end position="1009"/>
    </location>
</feature>
<feature type="active site" description="Proton donor" evidence="2">
    <location>
        <position position="202"/>
    </location>
</feature>
<feature type="active site" description="Nucleophile" evidence="2">
    <location>
        <position position="314"/>
    </location>
</feature>
<feature type="binding site" evidence="1">
    <location>
        <position position="96"/>
    </location>
    <ligand>
        <name>substrate</name>
    </ligand>
</feature>
<feature type="binding site" evidence="1">
    <location>
        <position position="141"/>
    </location>
    <ligand>
        <name>substrate</name>
    </ligand>
</feature>
<feature type="binding site" evidence="1">
    <location>
        <position position="142"/>
    </location>
    <ligand>
        <name>substrate</name>
    </ligand>
</feature>
<feature type="binding site" evidence="1">
    <location>
        <position position="143"/>
    </location>
    <ligand>
        <name>substrate</name>
    </ligand>
</feature>
<feature type="binding site" evidence="1">
    <location>
        <position position="201"/>
    </location>
    <ligand>
        <name>substrate</name>
    </ligand>
</feature>
<feature type="binding site" evidence="1">
    <location>
        <position position="271"/>
    </location>
    <ligand>
        <name>substrate</name>
    </ligand>
</feature>
<feature type="binding site" evidence="1">
    <location>
        <position position="379"/>
    </location>
    <ligand>
        <name>substrate</name>
    </ligand>
</feature>
<feature type="glycosylation site" description="N-linked (GlcNAc...) asparagine" evidence="2">
    <location>
        <position position="106"/>
    </location>
</feature>
<feature type="glycosylation site" description="N-linked (GlcNAc...) asparagine" evidence="2">
    <location>
        <position position="467"/>
    </location>
</feature>
<feature type="glycosylation site" description="N-linked (GlcNAc...) asparagine" evidence="2">
    <location>
        <position position="495"/>
    </location>
</feature>
<feature type="glycosylation site" description="N-linked (GlcNAc...) asparagine" evidence="2">
    <location>
        <position position="547"/>
    </location>
</feature>
<feature type="glycosylation site" description="N-linked (GlcNAc...) asparagine" evidence="2">
    <location>
        <position position="593"/>
    </location>
</feature>
<feature type="glycosylation site" description="N-linked (GlcNAc...) asparagine" evidence="2">
    <location>
        <position position="632"/>
    </location>
</feature>
<feature type="glycosylation site" description="N-linked (GlcNAc...) asparagine" evidence="2">
    <location>
        <position position="672"/>
    </location>
</feature>
<feature type="glycosylation site" description="N-linked (GlcNAc...) asparagine" evidence="2">
    <location>
        <position position="707"/>
    </location>
</feature>
<feature type="glycosylation site" description="N-linked (GlcNAc...) asparagine" evidence="2">
    <location>
        <position position="775"/>
    </location>
</feature>
<feature type="glycosylation site" description="N-linked (GlcNAc...) asparagine" evidence="2">
    <location>
        <position position="782"/>
    </location>
</feature>
<feature type="glycosylation site" description="N-linked (GlcNAc...) asparagine" evidence="2">
    <location>
        <position position="789"/>
    </location>
</feature>
<feature type="glycosylation site" description="N-linked (GlcNAc...) asparagine" evidence="2">
    <location>
        <position position="795"/>
    </location>
</feature>
<feature type="glycosylation site" description="N-linked (GlcNAc...) asparagine" evidence="2">
    <location>
        <position position="914"/>
    </location>
</feature>
<feature type="disulfide bond" evidence="1">
    <location>
        <begin position="277"/>
        <end position="330"/>
    </location>
</feature>
<organism>
    <name type="scientific">Pyrenophora tritici-repentis (strain Pt-1C-BFP)</name>
    <name type="common">Wheat tan spot fungus</name>
    <name type="synonym">Drechslera tritici-repentis</name>
    <dbReference type="NCBI Taxonomy" id="426418"/>
    <lineage>
        <taxon>Eukaryota</taxon>
        <taxon>Fungi</taxon>
        <taxon>Dikarya</taxon>
        <taxon>Ascomycota</taxon>
        <taxon>Pezizomycotina</taxon>
        <taxon>Dothideomycetes</taxon>
        <taxon>Pleosporomycetidae</taxon>
        <taxon>Pleosporales</taxon>
        <taxon>Pleosporineae</taxon>
        <taxon>Pleosporaceae</taxon>
        <taxon>Pyrenophora</taxon>
    </lineage>
</organism>
<comment type="function">
    <text evidence="1">Cleaves beta-linked terminal galactosyl residues from gangliosides, glycoproteins, and glycosaminoglycans.</text>
</comment>
<comment type="catalytic activity">
    <reaction>
        <text>Hydrolysis of terminal non-reducing beta-D-galactose residues in beta-D-galactosides.</text>
        <dbReference type="EC" id="3.2.1.23"/>
    </reaction>
</comment>
<comment type="subcellular location">
    <subcellularLocation>
        <location evidence="1">Secreted</location>
    </subcellularLocation>
</comment>
<comment type="similarity">
    <text evidence="3">Belongs to the glycosyl hydrolase 35 family.</text>
</comment>
<protein>
    <recommendedName>
        <fullName>Probable beta-galactosidase B</fullName>
        <ecNumber>3.2.1.23</ecNumber>
    </recommendedName>
    <alternativeName>
        <fullName>Lactase B</fullName>
    </alternativeName>
</protein>
<gene>
    <name type="primary">lacB</name>
    <name type="ORF">PTRG_05679</name>
</gene>
<dbReference type="EC" id="3.2.1.23"/>
<dbReference type="EMBL" id="DS231619">
    <property type="protein sequence ID" value="EDU48599.1"/>
    <property type="molecule type" value="Genomic_DNA"/>
</dbReference>
<dbReference type="RefSeq" id="XP_001936012.1">
    <property type="nucleotide sequence ID" value="XM_001935977.1"/>
</dbReference>
<dbReference type="SMR" id="B2W791"/>
<dbReference type="STRING" id="426418.B2W791"/>
<dbReference type="GlyCosmos" id="B2W791">
    <property type="glycosylation" value="13 sites, No reported glycans"/>
</dbReference>
<dbReference type="EnsemblFungi" id="EDU48599">
    <property type="protein sequence ID" value="EDU48599"/>
    <property type="gene ID" value="PTRG_05679"/>
</dbReference>
<dbReference type="GeneID" id="6343933"/>
<dbReference type="KEGG" id="ptrr:6343933"/>
<dbReference type="eggNOG" id="KOG0496">
    <property type="taxonomic scope" value="Eukaryota"/>
</dbReference>
<dbReference type="HOGENOM" id="CLU_005732_2_1_1"/>
<dbReference type="InParanoid" id="B2W791"/>
<dbReference type="OMA" id="GGCPGDI"/>
<dbReference type="OrthoDB" id="12732at28556"/>
<dbReference type="Proteomes" id="UP000001471">
    <property type="component" value="Unassembled WGS sequence"/>
</dbReference>
<dbReference type="GO" id="GO:0005576">
    <property type="term" value="C:extracellular region"/>
    <property type="evidence" value="ECO:0007669"/>
    <property type="project" value="UniProtKB-SubCell"/>
</dbReference>
<dbReference type="GO" id="GO:0004565">
    <property type="term" value="F:beta-galactosidase activity"/>
    <property type="evidence" value="ECO:0007669"/>
    <property type="project" value="UniProtKB-EC"/>
</dbReference>
<dbReference type="GO" id="GO:0000272">
    <property type="term" value="P:polysaccharide catabolic process"/>
    <property type="evidence" value="ECO:0007669"/>
    <property type="project" value="UniProtKB-KW"/>
</dbReference>
<dbReference type="FunFam" id="3.20.20.80:FF:000040">
    <property type="entry name" value="Beta-galactosidase A"/>
    <property type="match status" value="1"/>
</dbReference>
<dbReference type="Gene3D" id="2.102.20.10">
    <property type="entry name" value="Beta-galactosidase, domain 2"/>
    <property type="match status" value="1"/>
</dbReference>
<dbReference type="Gene3D" id="2.60.390.10">
    <property type="entry name" value="Beta-galactosidase, domain 3"/>
    <property type="match status" value="1"/>
</dbReference>
<dbReference type="Gene3D" id="2.60.120.260">
    <property type="entry name" value="Galactose-binding domain-like"/>
    <property type="match status" value="2"/>
</dbReference>
<dbReference type="Gene3D" id="3.20.20.80">
    <property type="entry name" value="Glycosidases"/>
    <property type="match status" value="1"/>
</dbReference>
<dbReference type="InterPro" id="IPR018954">
    <property type="entry name" value="Betagal_dom2"/>
</dbReference>
<dbReference type="InterPro" id="IPR037110">
    <property type="entry name" value="Betagal_dom2_sf"/>
</dbReference>
<dbReference type="InterPro" id="IPR025972">
    <property type="entry name" value="BetaGal_dom3"/>
</dbReference>
<dbReference type="InterPro" id="IPR036833">
    <property type="entry name" value="BetaGal_dom3_sf"/>
</dbReference>
<dbReference type="InterPro" id="IPR025300">
    <property type="entry name" value="BetaGal_jelly_roll_dom"/>
</dbReference>
<dbReference type="InterPro" id="IPR008979">
    <property type="entry name" value="Galactose-bd-like_sf"/>
</dbReference>
<dbReference type="InterPro" id="IPR031330">
    <property type="entry name" value="Gly_Hdrlase_35_cat"/>
</dbReference>
<dbReference type="InterPro" id="IPR001944">
    <property type="entry name" value="Glycoside_Hdrlase_35"/>
</dbReference>
<dbReference type="InterPro" id="IPR017853">
    <property type="entry name" value="Glycoside_hydrolase_SF"/>
</dbReference>
<dbReference type="PANTHER" id="PTHR23421">
    <property type="entry name" value="BETA-GALACTOSIDASE RELATED"/>
    <property type="match status" value="1"/>
</dbReference>
<dbReference type="Pfam" id="PF13364">
    <property type="entry name" value="BetaGal_ABD2"/>
    <property type="match status" value="2"/>
</dbReference>
<dbReference type="Pfam" id="PF10435">
    <property type="entry name" value="BetaGal_dom2"/>
    <property type="match status" value="1"/>
</dbReference>
<dbReference type="Pfam" id="PF13363">
    <property type="entry name" value="BetaGal_dom3"/>
    <property type="match status" value="1"/>
</dbReference>
<dbReference type="Pfam" id="PF01301">
    <property type="entry name" value="Glyco_hydro_35"/>
    <property type="match status" value="1"/>
</dbReference>
<dbReference type="PRINTS" id="PR00742">
    <property type="entry name" value="GLHYDRLASE35"/>
</dbReference>
<dbReference type="SMART" id="SM01029">
    <property type="entry name" value="BetaGal_dom2"/>
    <property type="match status" value="1"/>
</dbReference>
<dbReference type="SUPFAM" id="SSF51445">
    <property type="entry name" value="(Trans)glycosidases"/>
    <property type="match status" value="1"/>
</dbReference>
<dbReference type="SUPFAM" id="SSF117100">
    <property type="entry name" value="Beta-galactosidase LacA, domain 3"/>
    <property type="match status" value="1"/>
</dbReference>
<dbReference type="SUPFAM" id="SSF49785">
    <property type="entry name" value="Galactose-binding domain-like"/>
    <property type="match status" value="2"/>
</dbReference>
<dbReference type="SUPFAM" id="SSF51011">
    <property type="entry name" value="Glycosyl hydrolase domain"/>
    <property type="match status" value="1"/>
</dbReference>
<name>BGALB_PYRTR</name>
<proteinExistence type="inferred from homology"/>
<accession>B2W791</accession>
<evidence type="ECO:0000250" key="1"/>
<evidence type="ECO:0000255" key="2"/>
<evidence type="ECO:0000305" key="3"/>
<sequence>MKTIAGLSWISALSSLASLPNGLGVSAQNNTPSTWPLHDNGLSDVVQWDHYSFKVNGKRLFVFSGEIHYWRIPVYEVWEDLLEKIKAAGFTAFAFYGNWAYHSANNKTLDFESGAHDFSKLFEIAHRVGLYVITRPGPYVNAEANAGGFPLWLTTGAYGKLRDDDPRYLQALDPYFSKFSELTSKHLVTNGGNALVYQIENEYGEQWKDRTKKIPNDAAGRYMQALEDSARANGIEIPLIHNDPNMNTKSWSKDYAPGAVGNVDVAGLDSYPSCWSCNLAECTGTNGKYVAYQVVNYYDHFKEVSPTQPSFFPEFQGGSYNPWGGPEGGCPGDIGADFANLFYRNLISQRVTAVSLYMMFGGTNWGAIAAPVTATSYDYSSPISENREIGAKFYETKNLAMFTRVADDLTVTDRLGSSSSYTTNPAVTASELRNPITKAAFYVTIHSVSSSSTTESFKLHISTSVGNLTIPQHSGSIVLNGHQSKIISTDFAMGNKTLTYSTAEILTYALIDSSPVVVLSTDVGGSVEFHVKGATKGSLASSGFTSNATFRAEAGGVTTNIERVTGMGVYQFNNGVKVVLADKPTAYLFWAPNLSNDPFAPVDQSVLIQGPYLVRGAALDGDVVALKGDVKNSTTIEVFAHETALTLSWNGKKLETSRTPYGSLKAQISAFNGTIPLPSLNDWKVNEGLPEKMPEYDDNGAAWVVANHTTTPNPTKPDTLPVLYVDEYGFHNSFHLFRGYFEGSATGAQLSVQGGLAFGWSAWLNGDLVGSWLGNTTLGVGNMTLSFANATVHANGTNVLLIAQDNTGHDLRGGATDPRGILRATLDGADFTSWKIAGEAGGENIQLDPVRGPLAEGGLTAERLGWHLSGFSDCDWASASPSTGFSGADIKFYRTTFPLDIPEDVDASFAFILNATGPKTVRVQLFVNGYQYARFNPYVGNEVKFPIPPGILNYAGDNVIGLSVWAQGNDGAKVDVEFVQEYAVESSWSSRFDSEYLRPEWTEERLAYA</sequence>
<reference key="1">
    <citation type="journal article" date="2013" name="G3 (Bethesda)">
        <title>Comparative genomics of a plant-pathogenic fungus, Pyrenophora tritici-repentis, reveals transduplication and the impact of repeat elements on pathogenicity and population divergence.</title>
        <authorList>
            <person name="Manning V.A."/>
            <person name="Pandelova I."/>
            <person name="Dhillon B."/>
            <person name="Wilhelm L.J."/>
            <person name="Goodwin S.B."/>
            <person name="Berlin A.M."/>
            <person name="Figueroa M."/>
            <person name="Freitag M."/>
            <person name="Hane J.K."/>
            <person name="Henrissat B."/>
            <person name="Holman W.H."/>
            <person name="Kodira C.D."/>
            <person name="Martin J."/>
            <person name="Oliver R.P."/>
            <person name="Robbertse B."/>
            <person name="Schackwitz W."/>
            <person name="Schwartz D.C."/>
            <person name="Spatafora J.W."/>
            <person name="Turgeon B.G."/>
            <person name="Yandava C."/>
            <person name="Young S."/>
            <person name="Zhou S."/>
            <person name="Zeng Q."/>
            <person name="Grigoriev I.V."/>
            <person name="Ma L.-J."/>
            <person name="Ciuffetti L.M."/>
        </authorList>
    </citation>
    <scope>NUCLEOTIDE SEQUENCE [LARGE SCALE GENOMIC DNA]</scope>
    <source>
        <strain>Pt-1C-BFP</strain>
    </source>
</reference>